<reference key="1">
    <citation type="submission" date="2006-09" db="EMBL/GenBank/DDBJ databases">
        <authorList>
            <consortium name="The Klebsiella pneumonia Genome Sequencing Project"/>
            <person name="McClelland M."/>
            <person name="Sanderson E.K."/>
            <person name="Spieth J."/>
            <person name="Clifton W.S."/>
            <person name="Latreille P."/>
            <person name="Sabo A."/>
            <person name="Pepin K."/>
            <person name="Bhonagiri V."/>
            <person name="Porwollik S."/>
            <person name="Ali J."/>
            <person name="Wilson R.K."/>
        </authorList>
    </citation>
    <scope>NUCLEOTIDE SEQUENCE [LARGE SCALE GENOMIC DNA]</scope>
    <source>
        <strain>ATCC 700721 / MGH 78578</strain>
    </source>
</reference>
<proteinExistence type="inferred from homology"/>
<dbReference type="EC" id="2.1.2.1" evidence="1"/>
<dbReference type="EMBL" id="CP000647">
    <property type="protein sequence ID" value="ABR78286.1"/>
    <property type="molecule type" value="Genomic_DNA"/>
</dbReference>
<dbReference type="RefSeq" id="WP_002914027.1">
    <property type="nucleotide sequence ID" value="NC_009648.1"/>
</dbReference>
<dbReference type="SMR" id="A6TCG5"/>
<dbReference type="STRING" id="272620.KPN_02876"/>
<dbReference type="jPOST" id="A6TCG5"/>
<dbReference type="PaxDb" id="272620-KPN_02876"/>
<dbReference type="EnsemblBacteria" id="ABR78286">
    <property type="protein sequence ID" value="ABR78286"/>
    <property type="gene ID" value="KPN_02876"/>
</dbReference>
<dbReference type="GeneID" id="93250173"/>
<dbReference type="KEGG" id="kpn:KPN_02876"/>
<dbReference type="HOGENOM" id="CLU_022477_2_1_6"/>
<dbReference type="UniPathway" id="UPA00193"/>
<dbReference type="UniPathway" id="UPA00288">
    <property type="reaction ID" value="UER01023"/>
</dbReference>
<dbReference type="Proteomes" id="UP000000265">
    <property type="component" value="Chromosome"/>
</dbReference>
<dbReference type="GO" id="GO:0005829">
    <property type="term" value="C:cytosol"/>
    <property type="evidence" value="ECO:0007669"/>
    <property type="project" value="TreeGrafter"/>
</dbReference>
<dbReference type="GO" id="GO:0004372">
    <property type="term" value="F:glycine hydroxymethyltransferase activity"/>
    <property type="evidence" value="ECO:0007669"/>
    <property type="project" value="UniProtKB-UniRule"/>
</dbReference>
<dbReference type="GO" id="GO:0030170">
    <property type="term" value="F:pyridoxal phosphate binding"/>
    <property type="evidence" value="ECO:0007669"/>
    <property type="project" value="UniProtKB-UniRule"/>
</dbReference>
<dbReference type="GO" id="GO:0019264">
    <property type="term" value="P:glycine biosynthetic process from serine"/>
    <property type="evidence" value="ECO:0007669"/>
    <property type="project" value="UniProtKB-UniRule"/>
</dbReference>
<dbReference type="GO" id="GO:0035999">
    <property type="term" value="P:tetrahydrofolate interconversion"/>
    <property type="evidence" value="ECO:0007669"/>
    <property type="project" value="UniProtKB-UniRule"/>
</dbReference>
<dbReference type="CDD" id="cd00378">
    <property type="entry name" value="SHMT"/>
    <property type="match status" value="1"/>
</dbReference>
<dbReference type="FunFam" id="3.40.640.10:FF:000001">
    <property type="entry name" value="Serine hydroxymethyltransferase"/>
    <property type="match status" value="1"/>
</dbReference>
<dbReference type="FunFam" id="3.90.1150.10:FF:000003">
    <property type="entry name" value="Serine hydroxymethyltransferase"/>
    <property type="match status" value="1"/>
</dbReference>
<dbReference type="Gene3D" id="3.90.1150.10">
    <property type="entry name" value="Aspartate Aminotransferase, domain 1"/>
    <property type="match status" value="1"/>
</dbReference>
<dbReference type="Gene3D" id="3.40.640.10">
    <property type="entry name" value="Type I PLP-dependent aspartate aminotransferase-like (Major domain)"/>
    <property type="match status" value="1"/>
</dbReference>
<dbReference type="HAMAP" id="MF_00051">
    <property type="entry name" value="SHMT"/>
    <property type="match status" value="1"/>
</dbReference>
<dbReference type="InterPro" id="IPR015424">
    <property type="entry name" value="PyrdxlP-dep_Trfase"/>
</dbReference>
<dbReference type="InterPro" id="IPR015421">
    <property type="entry name" value="PyrdxlP-dep_Trfase_major"/>
</dbReference>
<dbReference type="InterPro" id="IPR015422">
    <property type="entry name" value="PyrdxlP-dep_Trfase_small"/>
</dbReference>
<dbReference type="InterPro" id="IPR001085">
    <property type="entry name" value="Ser_HO-MeTrfase"/>
</dbReference>
<dbReference type="InterPro" id="IPR049943">
    <property type="entry name" value="Ser_HO-MeTrfase-like"/>
</dbReference>
<dbReference type="InterPro" id="IPR019798">
    <property type="entry name" value="Ser_HO-MeTrfase_PLP_BS"/>
</dbReference>
<dbReference type="InterPro" id="IPR039429">
    <property type="entry name" value="SHMT-like_dom"/>
</dbReference>
<dbReference type="NCBIfam" id="NF000586">
    <property type="entry name" value="PRK00011.1"/>
    <property type="match status" value="1"/>
</dbReference>
<dbReference type="PANTHER" id="PTHR11680">
    <property type="entry name" value="SERINE HYDROXYMETHYLTRANSFERASE"/>
    <property type="match status" value="1"/>
</dbReference>
<dbReference type="PANTHER" id="PTHR11680:SF50">
    <property type="entry name" value="SERINE HYDROXYMETHYLTRANSFERASE"/>
    <property type="match status" value="1"/>
</dbReference>
<dbReference type="Pfam" id="PF00464">
    <property type="entry name" value="SHMT"/>
    <property type="match status" value="1"/>
</dbReference>
<dbReference type="PIRSF" id="PIRSF000412">
    <property type="entry name" value="SHMT"/>
    <property type="match status" value="1"/>
</dbReference>
<dbReference type="SUPFAM" id="SSF53383">
    <property type="entry name" value="PLP-dependent transferases"/>
    <property type="match status" value="1"/>
</dbReference>
<dbReference type="PROSITE" id="PS00096">
    <property type="entry name" value="SHMT"/>
    <property type="match status" value="1"/>
</dbReference>
<gene>
    <name evidence="1" type="primary">glyA</name>
    <name type="ordered locus">KPN78578_28250</name>
    <name type="ORF">KPN_02876</name>
</gene>
<comment type="function">
    <text evidence="1">Catalyzes the reversible interconversion of serine and glycine with tetrahydrofolate (THF) serving as the one-carbon carrier. This reaction serves as the major source of one-carbon groups required for the biosynthesis of purines, thymidylate, methionine, and other important biomolecules. Also exhibits THF-independent aldolase activity toward beta-hydroxyamino acids, producing glycine and aldehydes, via a retro-aldol mechanism.</text>
</comment>
<comment type="catalytic activity">
    <reaction evidence="1">
        <text>(6R)-5,10-methylene-5,6,7,8-tetrahydrofolate + glycine + H2O = (6S)-5,6,7,8-tetrahydrofolate + L-serine</text>
        <dbReference type="Rhea" id="RHEA:15481"/>
        <dbReference type="ChEBI" id="CHEBI:15377"/>
        <dbReference type="ChEBI" id="CHEBI:15636"/>
        <dbReference type="ChEBI" id="CHEBI:33384"/>
        <dbReference type="ChEBI" id="CHEBI:57305"/>
        <dbReference type="ChEBI" id="CHEBI:57453"/>
        <dbReference type="EC" id="2.1.2.1"/>
    </reaction>
</comment>
<comment type="cofactor">
    <cofactor evidence="1">
        <name>pyridoxal 5'-phosphate</name>
        <dbReference type="ChEBI" id="CHEBI:597326"/>
    </cofactor>
</comment>
<comment type="pathway">
    <text evidence="1">One-carbon metabolism; tetrahydrofolate interconversion.</text>
</comment>
<comment type="pathway">
    <text evidence="1">Amino-acid biosynthesis; glycine biosynthesis; glycine from L-serine: step 1/1.</text>
</comment>
<comment type="subunit">
    <text evidence="1">Homodimer.</text>
</comment>
<comment type="subcellular location">
    <subcellularLocation>
        <location evidence="1">Cytoplasm</location>
    </subcellularLocation>
</comment>
<comment type="similarity">
    <text evidence="1">Belongs to the SHMT family.</text>
</comment>
<protein>
    <recommendedName>
        <fullName evidence="1">Serine hydroxymethyltransferase</fullName>
        <shortName evidence="1">SHMT</shortName>
        <shortName evidence="1">Serine methylase</shortName>
        <ecNumber evidence="1">2.1.2.1</ecNumber>
    </recommendedName>
</protein>
<organism>
    <name type="scientific">Klebsiella pneumoniae subsp. pneumoniae (strain ATCC 700721 / MGH 78578)</name>
    <dbReference type="NCBI Taxonomy" id="272620"/>
    <lineage>
        <taxon>Bacteria</taxon>
        <taxon>Pseudomonadati</taxon>
        <taxon>Pseudomonadota</taxon>
        <taxon>Gammaproteobacteria</taxon>
        <taxon>Enterobacterales</taxon>
        <taxon>Enterobacteriaceae</taxon>
        <taxon>Klebsiella/Raoultella group</taxon>
        <taxon>Klebsiella</taxon>
        <taxon>Klebsiella pneumoniae complex</taxon>
    </lineage>
</organism>
<evidence type="ECO:0000255" key="1">
    <source>
        <dbReference type="HAMAP-Rule" id="MF_00051"/>
    </source>
</evidence>
<feature type="chain" id="PRO_1000006267" description="Serine hydroxymethyltransferase">
    <location>
        <begin position="1"/>
        <end position="417"/>
    </location>
</feature>
<feature type="binding site" evidence="1">
    <location>
        <position position="121"/>
    </location>
    <ligand>
        <name>(6S)-5,6,7,8-tetrahydrofolate</name>
        <dbReference type="ChEBI" id="CHEBI:57453"/>
    </ligand>
</feature>
<feature type="binding site" evidence="1">
    <location>
        <begin position="125"/>
        <end position="127"/>
    </location>
    <ligand>
        <name>(6S)-5,6,7,8-tetrahydrofolate</name>
        <dbReference type="ChEBI" id="CHEBI:57453"/>
    </ligand>
</feature>
<feature type="binding site" evidence="1">
    <location>
        <begin position="355"/>
        <end position="357"/>
    </location>
    <ligand>
        <name>(6S)-5,6,7,8-tetrahydrofolate</name>
        <dbReference type="ChEBI" id="CHEBI:57453"/>
    </ligand>
</feature>
<feature type="site" description="Plays an important role in substrate specificity" evidence="1">
    <location>
        <position position="228"/>
    </location>
</feature>
<feature type="modified residue" description="N6-(pyridoxal phosphate)lysine" evidence="1">
    <location>
        <position position="229"/>
    </location>
</feature>
<sequence>MLKREMNIADYDAELWQAMEQEKVRQEEHIELIASENYTSPRVMQAQGSQLTNKYAEGYPGKRYYGGCEYVDVVEQLAIDRAKELFGADYANVQPHSGSQANFAVYTALLQPGDTVLGMNLAQGGHLTHGSPVNFSGKLYNIIPYGIDESGKIDYDDMAKQAQEHKPKMIIGGFSAYSGIVDWAKMREIADSIGAYLFVDMAHVAGLIAAGVYPNPVPHAHVVTTTTHKTLAGPRGGLILAKGGSEELYKKLNSAVFPSAQGGPLMHVIAAKAVALKEAMEPEFKVYQQQVAKNAKAMVEVFLNRGYKVVSGGTENHLFLLDLVDKNLTGKEADAALGRANITVNKNSVPNDPKSPFVTSGIRIGSPAVTRRGFKEAEVKELAGWMCDVLDNINDDAVIERVKGKVLDICARFPVYA</sequence>
<keyword id="KW-0028">Amino-acid biosynthesis</keyword>
<keyword id="KW-0963">Cytoplasm</keyword>
<keyword id="KW-0554">One-carbon metabolism</keyword>
<keyword id="KW-0663">Pyridoxal phosphate</keyword>
<keyword id="KW-0808">Transferase</keyword>
<name>GLYA_KLEP7</name>
<accession>A6TCG5</accession>